<proteinExistence type="inferred from homology"/>
<dbReference type="EMBL" id="CP000438">
    <property type="protein sequence ID" value="ABJ14049.1"/>
    <property type="molecule type" value="Genomic_DNA"/>
</dbReference>
<dbReference type="RefSeq" id="WP_003095005.1">
    <property type="nucleotide sequence ID" value="NZ_CP034244.1"/>
</dbReference>
<dbReference type="SMR" id="Q02G06"/>
<dbReference type="KEGG" id="pau:PA14_61740"/>
<dbReference type="PseudoCAP" id="PA14_61740"/>
<dbReference type="HOGENOM" id="CLU_092816_2_1_6"/>
<dbReference type="BioCyc" id="PAER208963:G1G74-5219-MONOMER"/>
<dbReference type="Proteomes" id="UP000000653">
    <property type="component" value="Chromosome"/>
</dbReference>
<dbReference type="GO" id="GO:0009279">
    <property type="term" value="C:cell outer membrane"/>
    <property type="evidence" value="ECO:0007669"/>
    <property type="project" value="UniProtKB-SubCell"/>
</dbReference>
<dbReference type="GO" id="GO:0044874">
    <property type="term" value="P:lipoprotein localization to outer membrane"/>
    <property type="evidence" value="ECO:0007669"/>
    <property type="project" value="UniProtKB-UniRule"/>
</dbReference>
<dbReference type="GO" id="GO:0015031">
    <property type="term" value="P:protein transport"/>
    <property type="evidence" value="ECO:0007669"/>
    <property type="project" value="UniProtKB-KW"/>
</dbReference>
<dbReference type="CDD" id="cd16326">
    <property type="entry name" value="LolB"/>
    <property type="match status" value="1"/>
</dbReference>
<dbReference type="FunFam" id="2.50.20.10:FF:000009">
    <property type="entry name" value="Outer-membrane lipoprotein LolB"/>
    <property type="match status" value="1"/>
</dbReference>
<dbReference type="Gene3D" id="2.50.20.10">
    <property type="entry name" value="Lipoprotein localisation LolA/LolB/LppX"/>
    <property type="match status" value="1"/>
</dbReference>
<dbReference type="HAMAP" id="MF_00233">
    <property type="entry name" value="LolB"/>
    <property type="match status" value="1"/>
</dbReference>
<dbReference type="InterPro" id="IPR029046">
    <property type="entry name" value="LolA/LolB/LppX"/>
</dbReference>
<dbReference type="InterPro" id="IPR004565">
    <property type="entry name" value="OM_lipoprot_LolB"/>
</dbReference>
<dbReference type="NCBIfam" id="TIGR00548">
    <property type="entry name" value="lolB"/>
    <property type="match status" value="1"/>
</dbReference>
<dbReference type="Pfam" id="PF03550">
    <property type="entry name" value="LolB"/>
    <property type="match status" value="1"/>
</dbReference>
<dbReference type="SUPFAM" id="SSF89392">
    <property type="entry name" value="Prokaryotic lipoproteins and lipoprotein localization factors"/>
    <property type="match status" value="1"/>
</dbReference>
<dbReference type="PROSITE" id="PS51257">
    <property type="entry name" value="PROKAR_LIPOPROTEIN"/>
    <property type="match status" value="1"/>
</dbReference>
<protein>
    <recommendedName>
        <fullName evidence="1">Outer-membrane lipoprotein LolB</fullName>
    </recommendedName>
</protein>
<evidence type="ECO:0000255" key="1">
    <source>
        <dbReference type="HAMAP-Rule" id="MF_00233"/>
    </source>
</evidence>
<keyword id="KW-0998">Cell outer membrane</keyword>
<keyword id="KW-0143">Chaperone</keyword>
<keyword id="KW-0449">Lipoprotein</keyword>
<keyword id="KW-0472">Membrane</keyword>
<keyword id="KW-0564">Palmitate</keyword>
<keyword id="KW-0653">Protein transport</keyword>
<keyword id="KW-0732">Signal</keyword>
<keyword id="KW-0813">Transport</keyword>
<reference key="1">
    <citation type="journal article" date="2006" name="Genome Biol.">
        <title>Genomic analysis reveals that Pseudomonas aeruginosa virulence is combinatorial.</title>
        <authorList>
            <person name="Lee D.G."/>
            <person name="Urbach J.M."/>
            <person name="Wu G."/>
            <person name="Liberati N.T."/>
            <person name="Feinbaum R.L."/>
            <person name="Miyata S."/>
            <person name="Diggins L.T."/>
            <person name="He J."/>
            <person name="Saucier M."/>
            <person name="Deziel E."/>
            <person name="Friedman L."/>
            <person name="Li L."/>
            <person name="Grills G."/>
            <person name="Montgomery K."/>
            <person name="Kucherlapati R."/>
            <person name="Rahme L.G."/>
            <person name="Ausubel F.M."/>
        </authorList>
    </citation>
    <scope>NUCLEOTIDE SEQUENCE [LARGE SCALE GENOMIC DNA]</scope>
    <source>
        <strain>UCBPP-PA14</strain>
    </source>
</reference>
<gene>
    <name evidence="1" type="primary">lolB</name>
    <name type="ordered locus">PA14_61740</name>
</gene>
<feature type="signal peptide" evidence="1">
    <location>
        <begin position="1"/>
        <end position="17"/>
    </location>
</feature>
<feature type="chain" id="PRO_1000021667" description="Outer-membrane lipoprotein LolB">
    <location>
        <begin position="18"/>
        <end position="205"/>
    </location>
</feature>
<feature type="lipid moiety-binding region" description="N-palmitoyl cysteine" evidence="1">
    <location>
        <position position="18"/>
    </location>
</feature>
<feature type="lipid moiety-binding region" description="S-diacylglycerol cysteine" evidence="1">
    <location>
        <position position="18"/>
    </location>
</feature>
<organism>
    <name type="scientific">Pseudomonas aeruginosa (strain UCBPP-PA14)</name>
    <dbReference type="NCBI Taxonomy" id="208963"/>
    <lineage>
        <taxon>Bacteria</taxon>
        <taxon>Pseudomonadati</taxon>
        <taxon>Pseudomonadota</taxon>
        <taxon>Gammaproteobacteria</taxon>
        <taxon>Pseudomonadales</taxon>
        <taxon>Pseudomonadaceae</taxon>
        <taxon>Pseudomonas</taxon>
    </lineage>
</organism>
<accession>Q02G06</accession>
<comment type="function">
    <text evidence="1">Plays a critical role in the incorporation of lipoproteins in the outer membrane after they are released by the LolA protein.</text>
</comment>
<comment type="subunit">
    <text evidence="1">Monomer.</text>
</comment>
<comment type="subcellular location">
    <subcellularLocation>
        <location evidence="1">Cell outer membrane</location>
        <topology evidence="1">Lipid-anchor</topology>
    </subcellularLocation>
</comment>
<comment type="similarity">
    <text evidence="1">Belongs to the LolB family.</text>
</comment>
<sequence>MRLRLFLAASALALLSGCAGLTSHEALEGQGDAQTWKTHKQQLSELDAWQIDGKVGIRAPRDSGSGTLFWLQRQGYYDIRLSGPLGRGAARLTGREGAVSLEVAGQGRYQAESPEALLEEQLGWRLPVSHLLWWVRGLPAPDSKSRLTLDADSRLARLEQDGWQIEYTRYAEQNGYWLPERLKLHGQDLDVTLVIKDWQPRQLGR</sequence>
<name>LOLB_PSEAB</name>